<reference key="1">
    <citation type="journal article" date="2002" name="Nature">
        <title>Comparison of the genomes of two Xanthomonas pathogens with differing host specificities.</title>
        <authorList>
            <person name="da Silva A.C.R."/>
            <person name="Ferro J.A."/>
            <person name="Reinach F.C."/>
            <person name="Farah C.S."/>
            <person name="Furlan L.R."/>
            <person name="Quaggio R.B."/>
            <person name="Monteiro-Vitorello C.B."/>
            <person name="Van Sluys M.A."/>
            <person name="Almeida N.F. Jr."/>
            <person name="Alves L.M.C."/>
            <person name="do Amaral A.M."/>
            <person name="Bertolini M.C."/>
            <person name="Camargo L.E.A."/>
            <person name="Camarotte G."/>
            <person name="Cannavan F."/>
            <person name="Cardozo J."/>
            <person name="Chambergo F."/>
            <person name="Ciapina L.P."/>
            <person name="Cicarelli R.M.B."/>
            <person name="Coutinho L.L."/>
            <person name="Cursino-Santos J.R."/>
            <person name="El-Dorry H."/>
            <person name="Faria J.B."/>
            <person name="Ferreira A.J.S."/>
            <person name="Ferreira R.C.C."/>
            <person name="Ferro M.I.T."/>
            <person name="Formighieri E.F."/>
            <person name="Franco M.C."/>
            <person name="Greggio C.C."/>
            <person name="Gruber A."/>
            <person name="Katsuyama A.M."/>
            <person name="Kishi L.T."/>
            <person name="Leite R.P."/>
            <person name="Lemos E.G.M."/>
            <person name="Lemos M.V.F."/>
            <person name="Locali E.C."/>
            <person name="Machado M.A."/>
            <person name="Madeira A.M.B.N."/>
            <person name="Martinez-Rossi N.M."/>
            <person name="Martins E.C."/>
            <person name="Meidanis J."/>
            <person name="Menck C.F.M."/>
            <person name="Miyaki C.Y."/>
            <person name="Moon D.H."/>
            <person name="Moreira L.M."/>
            <person name="Novo M.T.M."/>
            <person name="Okura V.K."/>
            <person name="Oliveira M.C."/>
            <person name="Oliveira V.R."/>
            <person name="Pereira H.A."/>
            <person name="Rossi A."/>
            <person name="Sena J.A.D."/>
            <person name="Silva C."/>
            <person name="de Souza R.F."/>
            <person name="Spinola L.A.F."/>
            <person name="Takita M.A."/>
            <person name="Tamura R.E."/>
            <person name="Teixeira E.C."/>
            <person name="Tezza R.I.D."/>
            <person name="Trindade dos Santos M."/>
            <person name="Truffi D."/>
            <person name="Tsai S.M."/>
            <person name="White F.F."/>
            <person name="Setubal J.C."/>
            <person name="Kitajima J.P."/>
        </authorList>
    </citation>
    <scope>NUCLEOTIDE SEQUENCE [LARGE SCALE GENOMIC DNA]</scope>
    <source>
        <strain>306</strain>
    </source>
</reference>
<keyword id="KW-0687">Ribonucleoprotein</keyword>
<keyword id="KW-0689">Ribosomal protein</keyword>
<keyword id="KW-0694">RNA-binding</keyword>
<keyword id="KW-0699">rRNA-binding</keyword>
<feature type="chain" id="PRO_0000111265" description="Small ribosomal subunit protein bS18">
    <location>
        <begin position="1"/>
        <end position="76"/>
    </location>
</feature>
<sequence>MSKFFRRRKFCKFTAEGVKEIDYKDLNTLRQYLTENGKIVPSRVTGTKSKYQRQLATAVKRARFLALIPYTDNHDV</sequence>
<accession>Q8PM13</accession>
<organism>
    <name type="scientific">Xanthomonas axonopodis pv. citri (strain 306)</name>
    <dbReference type="NCBI Taxonomy" id="190486"/>
    <lineage>
        <taxon>Bacteria</taxon>
        <taxon>Pseudomonadati</taxon>
        <taxon>Pseudomonadota</taxon>
        <taxon>Gammaproteobacteria</taxon>
        <taxon>Lysobacterales</taxon>
        <taxon>Lysobacteraceae</taxon>
        <taxon>Xanthomonas</taxon>
    </lineage>
</organism>
<name>RS18_XANAC</name>
<protein>
    <recommendedName>
        <fullName evidence="1">Small ribosomal subunit protein bS18</fullName>
    </recommendedName>
    <alternativeName>
        <fullName evidence="2">30S ribosomal protein S18</fullName>
    </alternativeName>
</protein>
<gene>
    <name evidence="1" type="primary">rpsR</name>
    <name type="ordered locus">XAC1621</name>
</gene>
<dbReference type="EMBL" id="AE008923">
    <property type="protein sequence ID" value="AAM36489.1"/>
    <property type="molecule type" value="Genomic_DNA"/>
</dbReference>
<dbReference type="RefSeq" id="WP_002804494.1">
    <property type="nucleotide sequence ID" value="NC_003919.1"/>
</dbReference>
<dbReference type="SMR" id="Q8PM13"/>
<dbReference type="GeneID" id="97510001"/>
<dbReference type="KEGG" id="xac:XAC1621"/>
<dbReference type="eggNOG" id="COG0238">
    <property type="taxonomic scope" value="Bacteria"/>
</dbReference>
<dbReference type="HOGENOM" id="CLU_148710_2_3_6"/>
<dbReference type="Proteomes" id="UP000000576">
    <property type="component" value="Chromosome"/>
</dbReference>
<dbReference type="GO" id="GO:0022627">
    <property type="term" value="C:cytosolic small ribosomal subunit"/>
    <property type="evidence" value="ECO:0007669"/>
    <property type="project" value="TreeGrafter"/>
</dbReference>
<dbReference type="GO" id="GO:0070181">
    <property type="term" value="F:small ribosomal subunit rRNA binding"/>
    <property type="evidence" value="ECO:0007669"/>
    <property type="project" value="TreeGrafter"/>
</dbReference>
<dbReference type="GO" id="GO:0003735">
    <property type="term" value="F:structural constituent of ribosome"/>
    <property type="evidence" value="ECO:0007669"/>
    <property type="project" value="InterPro"/>
</dbReference>
<dbReference type="GO" id="GO:0006412">
    <property type="term" value="P:translation"/>
    <property type="evidence" value="ECO:0007669"/>
    <property type="project" value="UniProtKB-UniRule"/>
</dbReference>
<dbReference type="FunFam" id="4.10.640.10:FF:000001">
    <property type="entry name" value="30S ribosomal protein S18"/>
    <property type="match status" value="1"/>
</dbReference>
<dbReference type="Gene3D" id="4.10.640.10">
    <property type="entry name" value="Ribosomal protein S18"/>
    <property type="match status" value="1"/>
</dbReference>
<dbReference type="HAMAP" id="MF_00270">
    <property type="entry name" value="Ribosomal_bS18"/>
    <property type="match status" value="1"/>
</dbReference>
<dbReference type="InterPro" id="IPR001648">
    <property type="entry name" value="Ribosomal_bS18"/>
</dbReference>
<dbReference type="InterPro" id="IPR018275">
    <property type="entry name" value="Ribosomal_bS18_CS"/>
</dbReference>
<dbReference type="InterPro" id="IPR036870">
    <property type="entry name" value="Ribosomal_bS18_sf"/>
</dbReference>
<dbReference type="NCBIfam" id="TIGR00165">
    <property type="entry name" value="S18"/>
    <property type="match status" value="1"/>
</dbReference>
<dbReference type="PANTHER" id="PTHR13479">
    <property type="entry name" value="30S RIBOSOMAL PROTEIN S18"/>
    <property type="match status" value="1"/>
</dbReference>
<dbReference type="PANTHER" id="PTHR13479:SF40">
    <property type="entry name" value="SMALL RIBOSOMAL SUBUNIT PROTEIN BS18M"/>
    <property type="match status" value="1"/>
</dbReference>
<dbReference type="Pfam" id="PF01084">
    <property type="entry name" value="Ribosomal_S18"/>
    <property type="match status" value="1"/>
</dbReference>
<dbReference type="PRINTS" id="PR00974">
    <property type="entry name" value="RIBOSOMALS18"/>
</dbReference>
<dbReference type="SUPFAM" id="SSF46911">
    <property type="entry name" value="Ribosomal protein S18"/>
    <property type="match status" value="1"/>
</dbReference>
<dbReference type="PROSITE" id="PS00057">
    <property type="entry name" value="RIBOSOMAL_S18"/>
    <property type="match status" value="1"/>
</dbReference>
<evidence type="ECO:0000255" key="1">
    <source>
        <dbReference type="HAMAP-Rule" id="MF_00270"/>
    </source>
</evidence>
<evidence type="ECO:0000305" key="2"/>
<proteinExistence type="inferred from homology"/>
<comment type="function">
    <text evidence="1">Binds as a heterodimer with protein bS6 to the central domain of the 16S rRNA, where it helps stabilize the platform of the 30S subunit.</text>
</comment>
<comment type="subunit">
    <text evidence="1">Part of the 30S ribosomal subunit. Forms a tight heterodimer with protein bS6.</text>
</comment>
<comment type="similarity">
    <text evidence="1">Belongs to the bacterial ribosomal protein bS18 family.</text>
</comment>